<accession>Q2VPD4</accession>
<accession>Q32MV7</accession>
<accession>Q91XJ5</accession>
<accession>Q91XJ6</accession>
<proteinExistence type="evidence at protein level"/>
<gene>
    <name type="primary">Bmal2</name>
    <name type="synonym">Arntl2</name>
</gene>
<name>BMAL2_MOUSE</name>
<sequence>MEFPRKRRGRDSQPLQSEFMTDTTVESLPQNPFASLLSTRTGVSAPSGIREAHSQMEKRRRDKMNHLIQKLSSMIPPHIPTAHKLDKLSVLRRAVQYLRSLRGMTELYLGENSKPSFIQDKELSHLILKAAEGFLFVVGCERGRIFYVSKSVSKTLRYDQASLIGQNLFDFLHPKDVAKVKEQLSCDGSPREKPIDTKTSQVYSHPYTGRPRMHSGSRRSFFFRMKSCTVPVKEEQPCSSCSKKKDHRKFHTVHCTGYLRSWPLNVVGMEKESGGGKDSGPLTCLVAMGRLHPYIVPQKSGKINVRPAEFITRFAMNGKFVYVDQRATAILGYLPQELLGTSCYEYFHQDDHSSLTDKHKAVLQSKEKILTDSYKFRVKDGAFVTLKSEWFSFTNPWTKELEYIVSVNTLVLGRSETRLSLLHCGGSSQSSEDSFRQSCINVPGVSTGTVLGAGSIGTDIANEVLSLQRLHSSSPEDASPSEEVRDDCSVNGGNAYGPASTREPFAVSPSETEVLEAARQHQSTEPAHPHGPLPGDSAQLGFDVLCDSDSIDMAAFMNYLEAEGGLGDPGDFSDIQWAL</sequence>
<protein>
    <recommendedName>
        <fullName>Basic helix-loop-helix ARNT-like protein 2</fullName>
    </recommendedName>
    <alternativeName>
        <fullName>Aryl hydrocarbon receptor nuclear translocator-like protein 2</fullName>
    </alternativeName>
    <alternativeName>
        <fullName>Brain and muscle ARNT-like 2</fullName>
    </alternativeName>
</protein>
<dbReference type="EMBL" id="AY005163">
    <property type="protein sequence ID" value="AAF88141.1"/>
    <property type="molecule type" value="mRNA"/>
</dbReference>
<dbReference type="EMBL" id="AY014836">
    <property type="protein sequence ID" value="AAK12619.1"/>
    <property type="molecule type" value="mRNA"/>
</dbReference>
<dbReference type="EMBL" id="BC108965">
    <property type="protein sequence ID" value="AAI08966.1"/>
    <property type="molecule type" value="mRNA"/>
</dbReference>
<dbReference type="EMBL" id="BC108966">
    <property type="protein sequence ID" value="AAI08967.1"/>
    <property type="molecule type" value="mRNA"/>
</dbReference>
<dbReference type="CCDS" id="CCDS20702.1">
    <molecule id="Q2VPD4-1"/>
</dbReference>
<dbReference type="RefSeq" id="NP_001276608.1">
    <property type="nucleotide sequence ID" value="NM_001289679.1"/>
</dbReference>
<dbReference type="RefSeq" id="NP_001276609.1">
    <property type="nucleotide sequence ID" value="NM_001289680.1"/>
</dbReference>
<dbReference type="RefSeq" id="NP_001276610.1">
    <property type="nucleotide sequence ID" value="NM_001289681.1"/>
</dbReference>
<dbReference type="RefSeq" id="NP_758513.1">
    <molecule id="Q2VPD4-1"/>
    <property type="nucleotide sequence ID" value="NM_172309.2"/>
</dbReference>
<dbReference type="RefSeq" id="XP_006507116.1">
    <molecule id="Q2VPD4-1"/>
    <property type="nucleotide sequence ID" value="XM_006507053.4"/>
</dbReference>
<dbReference type="RefSeq" id="XP_036022089.1">
    <molecule id="Q2VPD4-1"/>
    <property type="nucleotide sequence ID" value="XM_036166196.1"/>
</dbReference>
<dbReference type="SMR" id="Q2VPD4"/>
<dbReference type="ComplexPortal" id="CPX-3228">
    <property type="entry name" value="CLOCK-BMAL2 transcription complex"/>
</dbReference>
<dbReference type="DIP" id="DIP-60819N"/>
<dbReference type="FunCoup" id="Q2VPD4">
    <property type="interactions" value="314"/>
</dbReference>
<dbReference type="IntAct" id="Q2VPD4">
    <property type="interactions" value="6"/>
</dbReference>
<dbReference type="STRING" id="10090.ENSMUSP00000107266"/>
<dbReference type="PhosphoSitePlus" id="Q2VPD4"/>
<dbReference type="jPOST" id="Q2VPD4"/>
<dbReference type="PaxDb" id="10090-ENSMUSP00000107266"/>
<dbReference type="Antibodypedia" id="12657">
    <property type="antibodies" value="118 antibodies from 23 providers"/>
</dbReference>
<dbReference type="DNASU" id="272322"/>
<dbReference type="Ensembl" id="ENSMUST00000080530.6">
    <molecule id="Q2VPD4-1"/>
    <property type="protein sequence ID" value="ENSMUSP00000079373.5"/>
    <property type="gene ID" value="ENSMUSG00000040187.16"/>
</dbReference>
<dbReference type="Ensembl" id="ENSMUST00000111639.8">
    <molecule id="Q2VPD4-1"/>
    <property type="protein sequence ID" value="ENSMUSP00000107266.2"/>
    <property type="gene ID" value="ENSMUSG00000040187.16"/>
</dbReference>
<dbReference type="Ensembl" id="ENSMUST00000129788.8">
    <molecule id="Q2VPD4-2"/>
    <property type="protein sequence ID" value="ENSMUSP00000121170.2"/>
    <property type="gene ID" value="ENSMUSG00000040187.16"/>
</dbReference>
<dbReference type="GeneID" id="272322"/>
<dbReference type="KEGG" id="mmu:272322"/>
<dbReference type="UCSC" id="uc009esj.2">
    <molecule id="Q2VPD4-1"/>
    <property type="organism name" value="mouse"/>
</dbReference>
<dbReference type="AGR" id="MGI:2684845"/>
<dbReference type="CTD" id="56938"/>
<dbReference type="MGI" id="MGI:2684845">
    <property type="gene designation" value="Bmal2"/>
</dbReference>
<dbReference type="VEuPathDB" id="HostDB:ENSMUSG00000040187"/>
<dbReference type="eggNOG" id="KOG3561">
    <property type="taxonomic scope" value="Eukaryota"/>
</dbReference>
<dbReference type="GeneTree" id="ENSGT00940000160423"/>
<dbReference type="HOGENOM" id="CLU_1371797_0_0_1"/>
<dbReference type="InParanoid" id="Q2VPD4"/>
<dbReference type="OMA" id="MLAPPRC"/>
<dbReference type="OrthoDB" id="71302at2759"/>
<dbReference type="PhylomeDB" id="Q2VPD4"/>
<dbReference type="TreeFam" id="TF319983"/>
<dbReference type="BioGRID-ORCS" id="272322">
    <property type="hits" value="1 hit in 79 CRISPR screens"/>
</dbReference>
<dbReference type="PRO" id="PR:Q2VPD4"/>
<dbReference type="Proteomes" id="UP000000589">
    <property type="component" value="Chromosome 6"/>
</dbReference>
<dbReference type="RNAct" id="Q2VPD4">
    <property type="molecule type" value="protein"/>
</dbReference>
<dbReference type="Bgee" id="ENSMUSG00000040187">
    <property type="expression patterns" value="Expressed in animal zygote and 164 other cell types or tissues"/>
</dbReference>
<dbReference type="ExpressionAtlas" id="Q2VPD4">
    <property type="expression patterns" value="baseline and differential"/>
</dbReference>
<dbReference type="GO" id="GO:1990513">
    <property type="term" value="C:CLOCK-BMAL transcription complex"/>
    <property type="evidence" value="ECO:0000353"/>
    <property type="project" value="ComplexPortal"/>
</dbReference>
<dbReference type="GO" id="GO:0005737">
    <property type="term" value="C:cytoplasm"/>
    <property type="evidence" value="ECO:0007669"/>
    <property type="project" value="InterPro"/>
</dbReference>
<dbReference type="GO" id="GO:0005730">
    <property type="term" value="C:nucleolus"/>
    <property type="evidence" value="ECO:0007669"/>
    <property type="project" value="Ensembl"/>
</dbReference>
<dbReference type="GO" id="GO:0005654">
    <property type="term" value="C:nucleoplasm"/>
    <property type="evidence" value="ECO:0007669"/>
    <property type="project" value="Ensembl"/>
</dbReference>
<dbReference type="GO" id="GO:0005634">
    <property type="term" value="C:nucleus"/>
    <property type="evidence" value="ECO:0000314"/>
    <property type="project" value="ComplexPortal"/>
</dbReference>
<dbReference type="GO" id="GO:0003700">
    <property type="term" value="F:DNA-binding transcription factor activity"/>
    <property type="evidence" value="ECO:0000266"/>
    <property type="project" value="MGI"/>
</dbReference>
<dbReference type="GO" id="GO:0000981">
    <property type="term" value="F:DNA-binding transcription factor activity, RNA polymerase II-specific"/>
    <property type="evidence" value="ECO:0007669"/>
    <property type="project" value="Ensembl"/>
</dbReference>
<dbReference type="GO" id="GO:0070888">
    <property type="term" value="F:E-box binding"/>
    <property type="evidence" value="ECO:0000314"/>
    <property type="project" value="UniProtKB"/>
</dbReference>
<dbReference type="GO" id="GO:0046983">
    <property type="term" value="F:protein dimerization activity"/>
    <property type="evidence" value="ECO:0007669"/>
    <property type="project" value="InterPro"/>
</dbReference>
<dbReference type="GO" id="GO:0032922">
    <property type="term" value="P:circadian regulation of gene expression"/>
    <property type="evidence" value="ECO:0000250"/>
    <property type="project" value="ComplexPortal"/>
</dbReference>
<dbReference type="GO" id="GO:0007623">
    <property type="term" value="P:circadian rhythm"/>
    <property type="evidence" value="ECO:0000266"/>
    <property type="project" value="MGI"/>
</dbReference>
<dbReference type="GO" id="GO:0042753">
    <property type="term" value="P:positive regulation of circadian rhythm"/>
    <property type="evidence" value="ECO:0000315"/>
    <property type="project" value="UniProtKB"/>
</dbReference>
<dbReference type="GO" id="GO:0045893">
    <property type="term" value="P:positive regulation of DNA-templated transcription"/>
    <property type="evidence" value="ECO:0000314"/>
    <property type="project" value="UniProtKB"/>
</dbReference>
<dbReference type="GO" id="GO:0045944">
    <property type="term" value="P:positive regulation of transcription by RNA polymerase II"/>
    <property type="evidence" value="ECO:0007669"/>
    <property type="project" value="Ensembl"/>
</dbReference>
<dbReference type="GO" id="GO:0006357">
    <property type="term" value="P:regulation of transcription by RNA polymerase II"/>
    <property type="evidence" value="ECO:0000266"/>
    <property type="project" value="MGI"/>
</dbReference>
<dbReference type="CDD" id="cd00130">
    <property type="entry name" value="PAS"/>
    <property type="match status" value="2"/>
</dbReference>
<dbReference type="FunFam" id="3.30.450.20:FF:000010">
    <property type="entry name" value="Aryl hydrocarbon receptor nuclear translocator-like, isoform CRA_b"/>
    <property type="match status" value="1"/>
</dbReference>
<dbReference type="Gene3D" id="4.10.280.10">
    <property type="entry name" value="Helix-loop-helix DNA-binding domain"/>
    <property type="match status" value="1"/>
</dbReference>
<dbReference type="Gene3D" id="3.30.450.20">
    <property type="entry name" value="PAS domain"/>
    <property type="match status" value="2"/>
</dbReference>
<dbReference type="InterPro" id="IPR011598">
    <property type="entry name" value="bHLH_dom"/>
</dbReference>
<dbReference type="InterPro" id="IPR050933">
    <property type="entry name" value="Circadian_TF"/>
</dbReference>
<dbReference type="InterPro" id="IPR036638">
    <property type="entry name" value="HLH_DNA-bd_sf"/>
</dbReference>
<dbReference type="InterPro" id="IPR001067">
    <property type="entry name" value="Nuc_translocat"/>
</dbReference>
<dbReference type="InterPro" id="IPR000014">
    <property type="entry name" value="PAS"/>
</dbReference>
<dbReference type="InterPro" id="IPR035965">
    <property type="entry name" value="PAS-like_dom_sf"/>
</dbReference>
<dbReference type="InterPro" id="IPR013767">
    <property type="entry name" value="PAS_fold"/>
</dbReference>
<dbReference type="NCBIfam" id="TIGR00229">
    <property type="entry name" value="sensory_box"/>
    <property type="match status" value="1"/>
</dbReference>
<dbReference type="PANTHER" id="PTHR23042">
    <property type="entry name" value="CIRCADIAN PROTEIN CLOCK/ARNT/BMAL/PAS"/>
    <property type="match status" value="1"/>
</dbReference>
<dbReference type="Pfam" id="PF00010">
    <property type="entry name" value="HLH"/>
    <property type="match status" value="1"/>
</dbReference>
<dbReference type="Pfam" id="PF00989">
    <property type="entry name" value="PAS"/>
    <property type="match status" value="1"/>
</dbReference>
<dbReference type="Pfam" id="PF14598">
    <property type="entry name" value="PAS_11"/>
    <property type="match status" value="1"/>
</dbReference>
<dbReference type="PRINTS" id="PR00785">
    <property type="entry name" value="NCTRNSLOCATR"/>
</dbReference>
<dbReference type="SMART" id="SM00353">
    <property type="entry name" value="HLH"/>
    <property type="match status" value="1"/>
</dbReference>
<dbReference type="SMART" id="SM00091">
    <property type="entry name" value="PAS"/>
    <property type="match status" value="2"/>
</dbReference>
<dbReference type="SUPFAM" id="SSF47459">
    <property type="entry name" value="HLH, helix-loop-helix DNA-binding domain"/>
    <property type="match status" value="1"/>
</dbReference>
<dbReference type="SUPFAM" id="SSF55785">
    <property type="entry name" value="PYP-like sensor domain (PAS domain)"/>
    <property type="match status" value="2"/>
</dbReference>
<dbReference type="PROSITE" id="PS50888">
    <property type="entry name" value="BHLH"/>
    <property type="match status" value="1"/>
</dbReference>
<dbReference type="PROSITE" id="PS50112">
    <property type="entry name" value="PAS"/>
    <property type="match status" value="2"/>
</dbReference>
<feature type="chain" id="PRO_0000273632" description="Basic helix-loop-helix ARNT-like protein 2">
    <location>
        <begin position="1"/>
        <end position="579"/>
    </location>
</feature>
<feature type="domain" description="bHLH" evidence="4">
    <location>
        <begin position="48"/>
        <end position="101"/>
    </location>
</feature>
<feature type="domain" description="PAS 1" evidence="3">
    <location>
        <begin position="119"/>
        <end position="190"/>
    </location>
</feature>
<feature type="domain" description="PAS 2" evidence="3">
    <location>
        <begin position="296"/>
        <end position="366"/>
    </location>
</feature>
<feature type="domain" description="PAC">
    <location>
        <begin position="371"/>
        <end position="414"/>
    </location>
</feature>
<feature type="region of interest" description="Interaction with PER2" evidence="7">
    <location>
        <begin position="1"/>
        <end position="198"/>
    </location>
</feature>
<feature type="region of interest" description="Disordered" evidence="5">
    <location>
        <begin position="40"/>
        <end position="61"/>
    </location>
</feature>
<feature type="region of interest" description="Disordered" evidence="5">
    <location>
        <begin position="186"/>
        <end position="213"/>
    </location>
</feature>
<feature type="region of interest" description="Disordered" evidence="5">
    <location>
        <begin position="469"/>
        <end position="536"/>
    </location>
</feature>
<feature type="short sequence motif" description="Nuclear localization signal" evidence="2">
    <location>
        <begin position="4"/>
        <end position="9"/>
    </location>
</feature>
<feature type="short sequence motif" description="Nuclear export signal 1" evidence="2">
    <location>
        <begin position="118"/>
        <end position="128"/>
    </location>
</feature>
<feature type="short sequence motif" description="Nuclear export signal 2" evidence="2">
    <location>
        <begin position="331"/>
        <end position="339"/>
    </location>
</feature>
<feature type="compositionally biased region" description="Basic and acidic residues" evidence="5">
    <location>
        <begin position="50"/>
        <end position="59"/>
    </location>
</feature>
<feature type="compositionally biased region" description="Basic and acidic residues" evidence="5">
    <location>
        <begin position="186"/>
        <end position="196"/>
    </location>
</feature>
<feature type="cross-link" description="Glycyl lysine isopeptide (Lys-Gly) (interchain with G-Cter in SUMO2 and SUMO3)" evidence="2">
    <location>
        <position position="226"/>
    </location>
</feature>
<feature type="cross-link" description="Glycyl lysine isopeptide (Lys-Gly) (interchain with G-Cter in SUMO2)" evidence="1">
    <location>
        <position position="233"/>
    </location>
</feature>
<feature type="splice variant" id="VSP_022586" description="In isoform 2." evidence="9">
    <original>T</original>
    <variation>K</variation>
    <location>
        <position position="199"/>
    </location>
</feature>
<feature type="splice variant" id="VSP_022587" description="In isoform 2." evidence="9">
    <location>
        <begin position="200"/>
        <end position="579"/>
    </location>
</feature>
<feature type="sequence conflict" description="In Ref. 2; AAI08967." evidence="10" ref="2">
    <original>G</original>
    <variation>D</variation>
    <location>
        <position position="9"/>
    </location>
</feature>
<feature type="sequence conflict" description="In Ref. 2; AAI08966/AAI08967." evidence="10" ref="2">
    <original>I</original>
    <variation>M</variation>
    <location>
        <position position="164"/>
    </location>
</feature>
<feature type="sequence conflict" description="In Ref. 2; AAI08966/AAI08967." evidence="10" ref="2">
    <original>Y</original>
    <variation>H</variation>
    <location>
        <position position="207"/>
    </location>
</feature>
<feature type="sequence conflict" description="In Ref. 2; AAI08966/AAI08967." evidence="10" ref="2">
    <original>M</original>
    <variation>V</variation>
    <location>
        <position position="213"/>
    </location>
</feature>
<feature type="sequence conflict" description="In Ref. 2; AAI08966/AAI08967." evidence="10" ref="2">
    <original>H</original>
    <variation>Q</variation>
    <location>
        <position position="423"/>
    </location>
</feature>
<feature type="sequence conflict" description="In Ref. 2; AAI08966." evidence="10" ref="2">
    <original>GG</original>
    <variation>SS</variation>
    <location>
        <begin position="425"/>
        <end position="426"/>
    </location>
</feature>
<feature type="sequence conflict" description="In Ref. 2; AAI08967." evidence="10" ref="2">
    <original>V</original>
    <variation>I</variation>
    <location>
        <position position="450"/>
    </location>
</feature>
<feature type="sequence conflict" description="In Ref. 2; AAI08966/AAI08967." evidence="10" ref="2">
    <original>S</original>
    <variation>N</variation>
    <location>
        <position position="479"/>
    </location>
</feature>
<feature type="sequence conflict" description="In Ref. 2; AAI08967." evidence="10" ref="2">
    <location>
        <position position="483"/>
    </location>
</feature>
<feature type="sequence conflict" description="In Ref. 2; AAI08966/AAI08967." evidence="10" ref="2">
    <original>N</original>
    <variation>S</variation>
    <location>
        <position position="494"/>
    </location>
</feature>
<feature type="sequence conflict" description="In Ref. 2; AAI08966/AAI08967." evidence="10" ref="2">
    <original>P</original>
    <variation>L</variation>
    <location>
        <position position="504"/>
    </location>
</feature>
<feature type="sequence conflict" description="In Ref. 2; AAI08966/AAI08967." evidence="10" ref="2">
    <original>E</original>
    <variation>K</variation>
    <location>
        <position position="511"/>
    </location>
</feature>
<feature type="sequence conflict" description="In Ref. 2; AAI08966/AAI08967." evidence="10" ref="2">
    <original>G</original>
    <variation>S</variation>
    <location>
        <position position="535"/>
    </location>
</feature>
<feature type="sequence conflict" description="In Ref. 2; AAI08967." evidence="10" ref="2">
    <original>I</original>
    <variation>T</variation>
    <location>
        <position position="551"/>
    </location>
</feature>
<feature type="sequence conflict" description="In Ref. 2; AAI08966." evidence="10" ref="2">
    <original>L</original>
    <variation>R</variation>
    <location>
        <position position="579"/>
    </location>
</feature>
<reference key="1">
    <citation type="journal article" date="2001" name="Neurosci. Lett.">
        <title>Cloning of mouse BMAL2 and its daily expression profile in the suprachiasmatic nucleus: a remarkable acceleration of Bmal2 sequence divergence after Bmal gene duplication.</title>
        <authorList>
            <person name="Okano T."/>
            <person name="Sasaki M."/>
            <person name="Fukada Y."/>
        </authorList>
    </citation>
    <scope>NUCLEOTIDE SEQUENCE [MRNA] (ISOFORMS 1 AND 2)</scope>
    <scope>INDUCTION</scope>
    <source>
        <strain>C57BL/6J</strain>
        <tissue>Midbrain</tissue>
    </source>
</reference>
<reference key="2">
    <citation type="journal article" date="2004" name="Genome Res.">
        <title>The status, quality, and expansion of the NIH full-length cDNA project: the Mammalian Gene Collection (MGC).</title>
        <authorList>
            <consortium name="The MGC Project Team"/>
        </authorList>
    </citation>
    <scope>NUCLEOTIDE SEQUENCE [LARGE SCALE MRNA] (ISOFORM 1)</scope>
</reference>
<reference key="3">
    <citation type="journal article" date="2009" name="J. Biol. Chem.">
        <title>Preferential inhibition of BMAL2-CLOCK activity by PER2 reemphasizes its negative role and a positive role of BMAL2 in the circadian transcription.</title>
        <authorList>
            <person name="Sasaki M."/>
            <person name="Yoshitane H."/>
            <person name="Du N.H."/>
            <person name="Okano T."/>
            <person name="Fukada Y."/>
        </authorList>
    </citation>
    <scope>FUNCTION</scope>
    <scope>INTERACTION WITH PER2</scope>
</reference>
<reference key="4">
    <citation type="journal article" date="2010" name="Curr. Biol.">
        <title>Circadian clock gene Bmal1 is not essential; functional replacement with its paralog, Bmal2.</title>
        <authorList>
            <person name="Shi S."/>
            <person name="Hida A."/>
            <person name="McGuinness O.P."/>
            <person name="Wasserman D.H."/>
            <person name="Yamazaki S."/>
            <person name="Johnson C.H."/>
        </authorList>
    </citation>
    <scope>FUNCTION</scope>
</reference>
<keyword id="KW-0010">Activator</keyword>
<keyword id="KW-0025">Alternative splicing</keyword>
<keyword id="KW-0090">Biological rhythms</keyword>
<keyword id="KW-0238">DNA-binding</keyword>
<keyword id="KW-1017">Isopeptide bond</keyword>
<keyword id="KW-0539">Nucleus</keyword>
<keyword id="KW-1185">Reference proteome</keyword>
<keyword id="KW-0677">Repeat</keyword>
<keyword id="KW-0804">Transcription</keyword>
<keyword id="KW-0805">Transcription regulation</keyword>
<keyword id="KW-0832">Ubl conjugation</keyword>
<organism>
    <name type="scientific">Mus musculus</name>
    <name type="common">Mouse</name>
    <dbReference type="NCBI Taxonomy" id="10090"/>
    <lineage>
        <taxon>Eukaryota</taxon>
        <taxon>Metazoa</taxon>
        <taxon>Chordata</taxon>
        <taxon>Craniata</taxon>
        <taxon>Vertebrata</taxon>
        <taxon>Euteleostomi</taxon>
        <taxon>Mammalia</taxon>
        <taxon>Eutheria</taxon>
        <taxon>Euarchontoglires</taxon>
        <taxon>Glires</taxon>
        <taxon>Rodentia</taxon>
        <taxon>Myomorpha</taxon>
        <taxon>Muroidea</taxon>
        <taxon>Muridae</taxon>
        <taxon>Murinae</taxon>
        <taxon>Mus</taxon>
        <taxon>Mus</taxon>
    </lineage>
</organism>
<evidence type="ECO:0000250" key="1">
    <source>
        <dbReference type="UniProtKB" id="Q8WYA1"/>
    </source>
</evidence>
<evidence type="ECO:0000250" key="2">
    <source>
        <dbReference type="UniProtKB" id="Q9WTL8"/>
    </source>
</evidence>
<evidence type="ECO:0000255" key="3">
    <source>
        <dbReference type="PROSITE-ProRule" id="PRU00140"/>
    </source>
</evidence>
<evidence type="ECO:0000255" key="4">
    <source>
        <dbReference type="PROSITE-ProRule" id="PRU00981"/>
    </source>
</evidence>
<evidence type="ECO:0000256" key="5">
    <source>
        <dbReference type="SAM" id="MobiDB-lite"/>
    </source>
</evidence>
<evidence type="ECO:0000269" key="6">
    <source>
    </source>
</evidence>
<evidence type="ECO:0000269" key="7">
    <source>
    </source>
</evidence>
<evidence type="ECO:0000269" key="8">
    <source>
    </source>
</evidence>
<evidence type="ECO:0000303" key="9">
    <source>
    </source>
</evidence>
<evidence type="ECO:0000305" key="10"/>
<comment type="function">
    <text evidence="7 8">Transcriptional activator which forms a core component of the circadian clock. The circadian clock, an internal time-keeping system, regulates various physiological processes through the generation of approximately 24 hour circadian rhythms in gene expression, which are translated into rhythms in metabolism and behavior. It is derived from the Latin roots 'circa' (about) and 'diem' (day) and acts as an important regulator of a wide array of physiological functions including metabolism, sleep, body temperature, blood pressure, endocrine, immune, cardiovascular, and renal function. Consists of two major components: the central clock, residing in the suprachiasmatic nucleus (SCN) of the brain, and the peripheral clocks that are present in nearly every tissue and organ system. Both the central and peripheral clocks can be reset by environmental cues, also known as Zeitgebers (German for 'timegivers'). The predominant Zeitgeber for the central clock is light, which is sensed by retina and signals directly to the SCN. The central clock entrains the peripheral clocks through neuronal and hormonal signals, body temperature and feeding-related cues, aligning all clocks with the external light/dark cycle. Circadian rhythms allow an organism to achieve temporal homeostasis with its environment at the molecular level by regulating gene expression to create a peak of protein expression once every 24 hours to control when a particular physiological process is most active with respect to the solar day. Transcription and translation of core clock components (CLOCK, NPAS2, BMAL1, BMAL2, PER1, PER2, PER3, CRY1 and CRY2) plays a critical role in rhythm generation, whereas delays imposed by post-translational modifications (PTMs) are important for determining the period (tau) of the rhythms (tau refers to the period of a rhythm and is the length, in time, of one complete cycle). A diurnal rhythm is synchronized with the day/night cycle, while the ultradian and infradian rhythms have a period shorter and longer than 24 hours, respectively. Disruptions in the circadian rhythms contribute to the pathology of cardiovascular diseases, cancer, metabolic syndromes and aging. A transcription/translation feedback loop (TTFL) forms the core of the molecular circadian clock mechanism. Transcription factors, CLOCK or NPAS2 and BMAL1 or BMAL2, form the positive limb of the feedback loop, act in the form of a heterodimer and activate the transcription of core clock genes and clock-controlled genes (involved in key metabolic processes), harboring E-box elements (5'-CACGTG-3') within their promoters. The core clock genes: PER1/2/3 and CRY1/2 which are transcriptional repressors form the negative limb of the feedback loop and interact with the CLOCK|NPAS2-BMAL1|BMAL2 heterodimer inhibiting its activity and thereby negatively regulating their own expression. This heterodimer also activates nuclear receptors NR1D1/2 and RORA/B/G, which form a second feedback loop and which activate and repress BMAL1 transcription, respectively. The CLOCK-BMAL2 heterodimer activates the transcription of SERPINE1/PAI1 and BHLHE40/DEC1.</text>
</comment>
<comment type="subunit">
    <text evidence="1 7">Component of the circadian core oscillator, which includes the CRY proteins, CLOCK, or NPAS2, BMAL1 or BMAL2, CSNK1D and/or CSNK1E, TIMELESS and the PER proteins. Interacts directly with CLOCK to form the BMAL2-CLOCK transactivator. Can form heterodimers or homodimers which interact directly with CLOCK to form the transcription activator. Interacts with NPAS2 and HIF1A (By similarity). Interacts with PER2.</text>
</comment>
<comment type="interaction">
    <interactant intactId="EBI-9696862">
        <id>Q2VPD4</id>
    </interactant>
    <interactant intactId="EBI-1266607">
        <id>P97784</id>
        <label>Cry1</label>
    </interactant>
    <organismsDiffer>false</organismsDiffer>
    <experiments>3</experiments>
</comment>
<comment type="subcellular location">
    <subcellularLocation>
        <location evidence="4">Nucleus</location>
    </subcellularLocation>
</comment>
<comment type="alternative products">
    <event type="alternative splicing"/>
    <isoform>
        <id>Q2VPD4-1</id>
        <name>1</name>
        <name>BMAL2a</name>
        <sequence type="displayed"/>
    </isoform>
    <isoform>
        <id>Q2VPD4-2</id>
        <name>2</name>
        <name>BMAL2b</name>
        <sequence type="described" ref="VSP_022586 VSP_022587"/>
    </isoform>
</comment>
<comment type="tissue specificity">
    <text>Expressed in the suprachiasmatic nucleus (SCN).</text>
</comment>
<comment type="induction">
    <text evidence="6">Constitutively expressed in the SCN. Little change throughout day under dark/light cycle.</text>
</comment>
<comment type="miscellaneous">
    <molecule>Isoform 2</molecule>
    <text evidence="10">May be produced at very low levels due to a premature stop codon in the mRNA, leading to nonsense-mediated mRNA decay.</text>
</comment>